<reference key="1">
    <citation type="journal article" date="2004" name="J. Infect. Dis.">
        <title>Progress toward characterization of the group A Streptococcus metagenome: complete genome sequence of a macrolide-resistant serotype M6 strain.</title>
        <authorList>
            <person name="Banks D.J."/>
            <person name="Porcella S.F."/>
            <person name="Barbian K.D."/>
            <person name="Beres S.B."/>
            <person name="Philips L.E."/>
            <person name="Voyich J.M."/>
            <person name="DeLeo F.R."/>
            <person name="Martin J.M."/>
            <person name="Somerville G.A."/>
            <person name="Musser J.M."/>
        </authorList>
    </citation>
    <scope>NUCLEOTIDE SEQUENCE [LARGE SCALE GENOMIC DNA]</scope>
    <source>
        <strain>ATCC BAA-946 / MGAS10394</strain>
    </source>
</reference>
<dbReference type="EMBL" id="CP000003">
    <property type="protein sequence ID" value="AAT87000.1"/>
    <property type="molecule type" value="Genomic_DNA"/>
</dbReference>
<dbReference type="RefSeq" id="WP_011184512.1">
    <property type="nucleotide sequence ID" value="NC_006086.1"/>
</dbReference>
<dbReference type="SMR" id="Q5XC63"/>
<dbReference type="CAZy" id="GH23">
    <property type="family name" value="Glycoside Hydrolase Family 23"/>
</dbReference>
<dbReference type="KEGG" id="spa:M6_Spy0865"/>
<dbReference type="HOGENOM" id="CLU_101375_3_0_9"/>
<dbReference type="Proteomes" id="UP000001167">
    <property type="component" value="Chromosome"/>
</dbReference>
<dbReference type="GO" id="GO:0009986">
    <property type="term" value="C:cell surface"/>
    <property type="evidence" value="ECO:0007669"/>
    <property type="project" value="UniProtKB-SubCell"/>
</dbReference>
<dbReference type="CDD" id="cd16891">
    <property type="entry name" value="CwlT-like"/>
    <property type="match status" value="1"/>
</dbReference>
<dbReference type="Gene3D" id="1.10.530.10">
    <property type="match status" value="1"/>
</dbReference>
<dbReference type="InterPro" id="IPR047194">
    <property type="entry name" value="CwlT-like_lysozyme"/>
</dbReference>
<dbReference type="InterPro" id="IPR023346">
    <property type="entry name" value="Lysozyme-like_dom_sf"/>
</dbReference>
<dbReference type="Pfam" id="PF13702">
    <property type="entry name" value="Lysozyme_like"/>
    <property type="match status" value="1"/>
</dbReference>
<dbReference type="SUPFAM" id="SSF53955">
    <property type="entry name" value="Lysozyme-like"/>
    <property type="match status" value="1"/>
</dbReference>
<accession>Q5XC63</accession>
<protein>
    <recommendedName>
        <fullName>Pneumococcal vaccine antigen A homolog</fullName>
    </recommendedName>
</protein>
<comment type="subcellular location">
    <subcellularLocation>
        <location evidence="1">Cell surface</location>
    </subcellularLocation>
</comment>
<organism>
    <name type="scientific">Streptococcus pyogenes serotype M6 (strain ATCC BAA-946 / MGAS10394)</name>
    <dbReference type="NCBI Taxonomy" id="286636"/>
    <lineage>
        <taxon>Bacteria</taxon>
        <taxon>Bacillati</taxon>
        <taxon>Bacillota</taxon>
        <taxon>Bacilli</taxon>
        <taxon>Lactobacillales</taxon>
        <taxon>Streptococcaceae</taxon>
        <taxon>Streptococcus</taxon>
    </lineage>
</organism>
<feature type="chain" id="PRO_0000097113" description="Pneumococcal vaccine antigen A homolog">
    <location>
        <begin position="1"/>
        <end position="199"/>
    </location>
</feature>
<evidence type="ECO:0000250" key="1"/>
<proteinExistence type="inferred from homology"/>
<name>PVAA_STRP6</name>
<sequence>MFRLLKRACSFLLFFVIYQSFVIHHNVQRVLAYKPMVEKTLAENDTKANVDLVLAMIYTETKGGEADVMQSSESSSGQKNSITDSQASIEHGVNLLSHNLALAEEAGVDSWTAVQAYNFGTAYIDYIAKHGGQNTVDLATTYSKTVVAPSLGNTSGQTYFYYHPLALISGGKLYKNGGNIYYSREVHFNLYLIELMSLF</sequence>
<gene>
    <name type="primary">pvaA</name>
    <name type="ordered locus">M6_Spy0865</name>
</gene>